<protein>
    <recommendedName>
        <fullName evidence="1">Protein translocase subunit SecA</fullName>
        <ecNumber evidence="1">7.4.2.8</ecNumber>
    </recommendedName>
</protein>
<sequence>MFRSILTKIFGSRNDRILRRLNKIVIKINQLEPEFEALSDDDLKAKTDAFKARLAQGETLEQLLPEAFATVREASKRVLGMRHFDVQLLGGMVLTNRCIAEMRTGEGKTLTATLPCYLNALTGKGVHVVTVNDYLARRDAETNRPLFEFLGMTVGVNVPGLSPEQKREAYAADVTYATNSELGFDYLRDNLAHTAQERFQRYLHYALVDEVDSILIDEARTPLIISGQAEDSSELYMTVDKLIPDLIKQDKEDSEEYQGEGDFTLDLKTKQAHLTERGQEKVEQWLTEQGLMSAEESLYSPSKISLLHHVYAALRAHTLFERDVDYIVKDGEIVIVDEHTGRTMAGRRWSDGLHQAIEAKEGVRIQSENQTVASITYQNYFRLYEKLAGMTGTADTEAFEFQQIYGLETIVVPTNRPMIRDDRTDVMFENEEYKFNAIIEDIKDCVARNQPVLVGTISIEKSELLSHALKKAGIKHNVLNAKFHAQEAEIVANAGYPGTVTIATNMAGRGTDIVLGGNWKAEIAKLDNPTEAQIEAIHTAWKARHEIVKAAGGLHIIGTERHESRRIDNQLRGRSGRQGDPGSSRFYLSLDDALMRIYLNEGKLNLMRKAFSTAGEAMESKMLTKVIASAQAKVEAHNFDGRKNLLEFDDVANDQRHAIYAQRNTLLDNEDISDTIDVIRADVFNQVIDQYIPPQSLEEMWDVPALEQRLKHDFALDLPLEKWLEEDNHFDEDALRQRVLDAAIEEYKQKESIVGEQTMRSFEKGVMLQTLDELWKEHLSAMDHLRRGIHLRGYAQKDPKQEYKKECFQMFTDMLDALKLSVVTTLSRVQVRTQEEVEQAERQRQEMAKRETASMQYNADEDSGEENTRRVGRNEPCPCGSGKKYKHCHGSKAKY</sequence>
<accession>Q9CLK7</accession>
<organism>
    <name type="scientific">Pasteurella multocida (strain Pm70)</name>
    <dbReference type="NCBI Taxonomy" id="272843"/>
    <lineage>
        <taxon>Bacteria</taxon>
        <taxon>Pseudomonadati</taxon>
        <taxon>Pseudomonadota</taxon>
        <taxon>Gammaproteobacteria</taxon>
        <taxon>Pasteurellales</taxon>
        <taxon>Pasteurellaceae</taxon>
        <taxon>Pasteurella</taxon>
    </lineage>
</organism>
<feature type="chain" id="PRO_0000320883" description="Protein translocase subunit SecA">
    <location>
        <begin position="1"/>
        <end position="895"/>
    </location>
</feature>
<feature type="region of interest" description="Disordered" evidence="2">
    <location>
        <begin position="833"/>
        <end position="895"/>
    </location>
</feature>
<feature type="compositionally biased region" description="Basic and acidic residues" evidence="2">
    <location>
        <begin position="833"/>
        <end position="852"/>
    </location>
</feature>
<feature type="compositionally biased region" description="Basic residues" evidence="2">
    <location>
        <begin position="883"/>
        <end position="895"/>
    </location>
</feature>
<feature type="binding site" evidence="1">
    <location>
        <position position="87"/>
    </location>
    <ligand>
        <name>ATP</name>
        <dbReference type="ChEBI" id="CHEBI:30616"/>
    </ligand>
</feature>
<feature type="binding site" evidence="1">
    <location>
        <begin position="105"/>
        <end position="109"/>
    </location>
    <ligand>
        <name>ATP</name>
        <dbReference type="ChEBI" id="CHEBI:30616"/>
    </ligand>
</feature>
<feature type="binding site" evidence="1">
    <location>
        <position position="512"/>
    </location>
    <ligand>
        <name>ATP</name>
        <dbReference type="ChEBI" id="CHEBI:30616"/>
    </ligand>
</feature>
<feature type="binding site" evidence="1">
    <location>
        <position position="877"/>
    </location>
    <ligand>
        <name>Zn(2+)</name>
        <dbReference type="ChEBI" id="CHEBI:29105"/>
    </ligand>
</feature>
<feature type="binding site" evidence="1">
    <location>
        <position position="879"/>
    </location>
    <ligand>
        <name>Zn(2+)</name>
        <dbReference type="ChEBI" id="CHEBI:29105"/>
    </ligand>
</feature>
<feature type="binding site" evidence="1">
    <location>
        <position position="888"/>
    </location>
    <ligand>
        <name>Zn(2+)</name>
        <dbReference type="ChEBI" id="CHEBI:29105"/>
    </ligand>
</feature>
<feature type="binding site" evidence="1">
    <location>
        <position position="889"/>
    </location>
    <ligand>
        <name>Zn(2+)</name>
        <dbReference type="ChEBI" id="CHEBI:29105"/>
    </ligand>
</feature>
<keyword id="KW-0067">ATP-binding</keyword>
<keyword id="KW-0997">Cell inner membrane</keyword>
<keyword id="KW-1003">Cell membrane</keyword>
<keyword id="KW-0963">Cytoplasm</keyword>
<keyword id="KW-0472">Membrane</keyword>
<keyword id="KW-0479">Metal-binding</keyword>
<keyword id="KW-0547">Nucleotide-binding</keyword>
<keyword id="KW-0653">Protein transport</keyword>
<keyword id="KW-1185">Reference proteome</keyword>
<keyword id="KW-1278">Translocase</keyword>
<keyword id="KW-0811">Translocation</keyword>
<keyword id="KW-0813">Transport</keyword>
<keyword id="KW-0862">Zinc</keyword>
<evidence type="ECO:0000255" key="1">
    <source>
        <dbReference type="HAMAP-Rule" id="MF_01382"/>
    </source>
</evidence>
<evidence type="ECO:0000256" key="2">
    <source>
        <dbReference type="SAM" id="MobiDB-lite"/>
    </source>
</evidence>
<comment type="function">
    <text evidence="1">Part of the Sec protein translocase complex. Interacts with the SecYEG preprotein conducting channel. Has a central role in coupling the hydrolysis of ATP to the transfer of proteins into and across the cell membrane, serving both as a receptor for the preprotein-SecB complex and as an ATP-driven molecular motor driving the stepwise translocation of polypeptide chains across the membrane.</text>
</comment>
<comment type="catalytic activity">
    <reaction evidence="1">
        <text>ATP + H2O + cellular proteinSide 1 = ADP + phosphate + cellular proteinSide 2.</text>
        <dbReference type="EC" id="7.4.2.8"/>
    </reaction>
</comment>
<comment type="cofactor">
    <cofactor evidence="1">
        <name>Zn(2+)</name>
        <dbReference type="ChEBI" id="CHEBI:29105"/>
    </cofactor>
    <text evidence="1">May bind 1 zinc ion per subunit.</text>
</comment>
<comment type="subunit">
    <text evidence="1">Monomer and homodimer. Part of the essential Sec protein translocation apparatus which comprises SecA, SecYEG and auxiliary proteins SecDF-YajC and YidC.</text>
</comment>
<comment type="subcellular location">
    <subcellularLocation>
        <location evidence="1">Cell inner membrane</location>
        <topology evidence="1">Peripheral membrane protein</topology>
        <orientation evidence="1">Cytoplasmic side</orientation>
    </subcellularLocation>
    <subcellularLocation>
        <location evidence="1">Cytoplasm</location>
    </subcellularLocation>
    <text evidence="1">Distribution is 50-50.</text>
</comment>
<comment type="similarity">
    <text evidence="1">Belongs to the SecA family.</text>
</comment>
<name>SECA_PASMU</name>
<gene>
    <name evidence="1" type="primary">secA</name>
    <name type="ordered locus">PM1219</name>
</gene>
<reference key="1">
    <citation type="journal article" date="2001" name="Proc. Natl. Acad. Sci. U.S.A.">
        <title>Complete genomic sequence of Pasteurella multocida Pm70.</title>
        <authorList>
            <person name="May B.J."/>
            <person name="Zhang Q."/>
            <person name="Li L.L."/>
            <person name="Paustian M.L."/>
            <person name="Whittam T.S."/>
            <person name="Kapur V."/>
        </authorList>
    </citation>
    <scope>NUCLEOTIDE SEQUENCE [LARGE SCALE GENOMIC DNA]</scope>
    <source>
        <strain>Pm70</strain>
    </source>
</reference>
<proteinExistence type="inferred from homology"/>
<dbReference type="EC" id="7.4.2.8" evidence="1"/>
<dbReference type="EMBL" id="AE004439">
    <property type="protein sequence ID" value="AAK03303.1"/>
    <property type="molecule type" value="Genomic_DNA"/>
</dbReference>
<dbReference type="RefSeq" id="WP_010907079.1">
    <property type="nucleotide sequence ID" value="NC_002663.1"/>
</dbReference>
<dbReference type="SMR" id="Q9CLK7"/>
<dbReference type="STRING" id="272843.PM1219"/>
<dbReference type="EnsemblBacteria" id="AAK03303">
    <property type="protein sequence ID" value="AAK03303"/>
    <property type="gene ID" value="PM1219"/>
</dbReference>
<dbReference type="KEGG" id="pmu:PM1219"/>
<dbReference type="PATRIC" id="fig|272843.6.peg.1229"/>
<dbReference type="HOGENOM" id="CLU_005314_3_0_6"/>
<dbReference type="OrthoDB" id="9805579at2"/>
<dbReference type="Proteomes" id="UP000000809">
    <property type="component" value="Chromosome"/>
</dbReference>
<dbReference type="GO" id="GO:0031522">
    <property type="term" value="C:cell envelope Sec protein transport complex"/>
    <property type="evidence" value="ECO:0007669"/>
    <property type="project" value="TreeGrafter"/>
</dbReference>
<dbReference type="GO" id="GO:0005829">
    <property type="term" value="C:cytosol"/>
    <property type="evidence" value="ECO:0007669"/>
    <property type="project" value="TreeGrafter"/>
</dbReference>
<dbReference type="GO" id="GO:0005886">
    <property type="term" value="C:plasma membrane"/>
    <property type="evidence" value="ECO:0007669"/>
    <property type="project" value="UniProtKB-SubCell"/>
</dbReference>
<dbReference type="GO" id="GO:0005524">
    <property type="term" value="F:ATP binding"/>
    <property type="evidence" value="ECO:0007669"/>
    <property type="project" value="UniProtKB-UniRule"/>
</dbReference>
<dbReference type="GO" id="GO:0046872">
    <property type="term" value="F:metal ion binding"/>
    <property type="evidence" value="ECO:0007669"/>
    <property type="project" value="UniProtKB-KW"/>
</dbReference>
<dbReference type="GO" id="GO:0008564">
    <property type="term" value="F:protein-exporting ATPase activity"/>
    <property type="evidence" value="ECO:0007669"/>
    <property type="project" value="UniProtKB-EC"/>
</dbReference>
<dbReference type="GO" id="GO:0065002">
    <property type="term" value="P:intracellular protein transmembrane transport"/>
    <property type="evidence" value="ECO:0007669"/>
    <property type="project" value="UniProtKB-UniRule"/>
</dbReference>
<dbReference type="GO" id="GO:0017038">
    <property type="term" value="P:protein import"/>
    <property type="evidence" value="ECO:0007669"/>
    <property type="project" value="InterPro"/>
</dbReference>
<dbReference type="GO" id="GO:0006605">
    <property type="term" value="P:protein targeting"/>
    <property type="evidence" value="ECO:0007669"/>
    <property type="project" value="UniProtKB-UniRule"/>
</dbReference>
<dbReference type="GO" id="GO:0043952">
    <property type="term" value="P:protein transport by the Sec complex"/>
    <property type="evidence" value="ECO:0007669"/>
    <property type="project" value="TreeGrafter"/>
</dbReference>
<dbReference type="CDD" id="cd17928">
    <property type="entry name" value="DEXDc_SecA"/>
    <property type="match status" value="1"/>
</dbReference>
<dbReference type="CDD" id="cd18803">
    <property type="entry name" value="SF2_C_secA"/>
    <property type="match status" value="1"/>
</dbReference>
<dbReference type="FunFam" id="3.40.50.300:FF:000113">
    <property type="entry name" value="Preprotein translocase subunit SecA"/>
    <property type="match status" value="1"/>
</dbReference>
<dbReference type="FunFam" id="3.90.1440.10:FF:000001">
    <property type="entry name" value="Preprotein translocase subunit SecA"/>
    <property type="match status" value="1"/>
</dbReference>
<dbReference type="FunFam" id="1.10.3060.10:FF:000003">
    <property type="entry name" value="Protein translocase subunit SecA"/>
    <property type="match status" value="1"/>
</dbReference>
<dbReference type="Gene3D" id="1.10.3060.10">
    <property type="entry name" value="Helical scaffold and wing domains of SecA"/>
    <property type="match status" value="1"/>
</dbReference>
<dbReference type="Gene3D" id="3.40.50.300">
    <property type="entry name" value="P-loop containing nucleotide triphosphate hydrolases"/>
    <property type="match status" value="2"/>
</dbReference>
<dbReference type="Gene3D" id="3.90.1440.10">
    <property type="entry name" value="SecA, preprotein cross-linking domain"/>
    <property type="match status" value="1"/>
</dbReference>
<dbReference type="HAMAP" id="MF_01382">
    <property type="entry name" value="SecA"/>
    <property type="match status" value="1"/>
</dbReference>
<dbReference type="InterPro" id="IPR014001">
    <property type="entry name" value="Helicase_ATP-bd"/>
</dbReference>
<dbReference type="InterPro" id="IPR027417">
    <property type="entry name" value="P-loop_NTPase"/>
</dbReference>
<dbReference type="InterPro" id="IPR004027">
    <property type="entry name" value="SEC_C_motif"/>
</dbReference>
<dbReference type="InterPro" id="IPR000185">
    <property type="entry name" value="SecA"/>
</dbReference>
<dbReference type="InterPro" id="IPR020937">
    <property type="entry name" value="SecA_CS"/>
</dbReference>
<dbReference type="InterPro" id="IPR011115">
    <property type="entry name" value="SecA_DEAD"/>
</dbReference>
<dbReference type="InterPro" id="IPR014018">
    <property type="entry name" value="SecA_motor_DEAD"/>
</dbReference>
<dbReference type="InterPro" id="IPR011130">
    <property type="entry name" value="SecA_preprotein_X-link_dom"/>
</dbReference>
<dbReference type="InterPro" id="IPR044722">
    <property type="entry name" value="SecA_SF2_C"/>
</dbReference>
<dbReference type="InterPro" id="IPR011116">
    <property type="entry name" value="SecA_Wing/Scaffold"/>
</dbReference>
<dbReference type="InterPro" id="IPR036266">
    <property type="entry name" value="SecA_Wing/Scaffold_sf"/>
</dbReference>
<dbReference type="InterPro" id="IPR036670">
    <property type="entry name" value="SecA_X-link_sf"/>
</dbReference>
<dbReference type="NCBIfam" id="NF009538">
    <property type="entry name" value="PRK12904.1"/>
    <property type="match status" value="1"/>
</dbReference>
<dbReference type="NCBIfam" id="TIGR00963">
    <property type="entry name" value="secA"/>
    <property type="match status" value="1"/>
</dbReference>
<dbReference type="PANTHER" id="PTHR30612:SF0">
    <property type="entry name" value="CHLOROPLAST PROTEIN-TRANSPORTING ATPASE"/>
    <property type="match status" value="1"/>
</dbReference>
<dbReference type="PANTHER" id="PTHR30612">
    <property type="entry name" value="SECA INNER MEMBRANE COMPONENT OF SEC PROTEIN SECRETION SYSTEM"/>
    <property type="match status" value="1"/>
</dbReference>
<dbReference type="Pfam" id="PF21090">
    <property type="entry name" value="P-loop_SecA"/>
    <property type="match status" value="1"/>
</dbReference>
<dbReference type="Pfam" id="PF02810">
    <property type="entry name" value="SEC-C"/>
    <property type="match status" value="1"/>
</dbReference>
<dbReference type="Pfam" id="PF07517">
    <property type="entry name" value="SecA_DEAD"/>
    <property type="match status" value="1"/>
</dbReference>
<dbReference type="Pfam" id="PF01043">
    <property type="entry name" value="SecA_PP_bind"/>
    <property type="match status" value="1"/>
</dbReference>
<dbReference type="Pfam" id="PF07516">
    <property type="entry name" value="SecA_SW"/>
    <property type="match status" value="1"/>
</dbReference>
<dbReference type="PRINTS" id="PR00906">
    <property type="entry name" value="SECA"/>
</dbReference>
<dbReference type="SMART" id="SM00957">
    <property type="entry name" value="SecA_DEAD"/>
    <property type="match status" value="1"/>
</dbReference>
<dbReference type="SMART" id="SM00958">
    <property type="entry name" value="SecA_PP_bind"/>
    <property type="match status" value="1"/>
</dbReference>
<dbReference type="SUPFAM" id="SSF81886">
    <property type="entry name" value="Helical scaffold and wing domains of SecA"/>
    <property type="match status" value="1"/>
</dbReference>
<dbReference type="SUPFAM" id="SSF52540">
    <property type="entry name" value="P-loop containing nucleoside triphosphate hydrolases"/>
    <property type="match status" value="2"/>
</dbReference>
<dbReference type="SUPFAM" id="SSF81767">
    <property type="entry name" value="Pre-protein crosslinking domain of SecA"/>
    <property type="match status" value="1"/>
</dbReference>
<dbReference type="PROSITE" id="PS01312">
    <property type="entry name" value="SECA"/>
    <property type="match status" value="1"/>
</dbReference>
<dbReference type="PROSITE" id="PS51196">
    <property type="entry name" value="SECA_MOTOR_DEAD"/>
    <property type="match status" value="1"/>
</dbReference>